<protein>
    <recommendedName>
        <fullName evidence="1">Erythronate-4-phosphate dehydrogenase</fullName>
        <ecNumber evidence="1">1.1.1.290</ecNumber>
    </recommendedName>
</protein>
<gene>
    <name evidence="1" type="primary">pdxB</name>
    <name type="ordered locus">SG1621</name>
</gene>
<feature type="chain" id="PRO_0000297477" description="Erythronate-4-phosphate dehydrogenase">
    <location>
        <begin position="1"/>
        <end position="377"/>
    </location>
</feature>
<feature type="active site" evidence="1">
    <location>
        <position position="208"/>
    </location>
</feature>
<feature type="active site" evidence="1">
    <location>
        <position position="237"/>
    </location>
</feature>
<feature type="active site" description="Proton donor" evidence="1">
    <location>
        <position position="254"/>
    </location>
</feature>
<feature type="binding site" evidence="1">
    <location>
        <position position="45"/>
    </location>
    <ligand>
        <name>substrate</name>
    </ligand>
</feature>
<feature type="binding site" evidence="1">
    <location>
        <position position="66"/>
    </location>
    <ligand>
        <name>substrate</name>
    </ligand>
</feature>
<feature type="binding site" evidence="1">
    <location>
        <position position="146"/>
    </location>
    <ligand>
        <name>NAD(+)</name>
        <dbReference type="ChEBI" id="CHEBI:57540"/>
    </ligand>
</feature>
<feature type="binding site" evidence="1">
    <location>
        <position position="175"/>
    </location>
    <ligand>
        <name>NAD(+)</name>
        <dbReference type="ChEBI" id="CHEBI:57540"/>
    </ligand>
</feature>
<feature type="binding site" evidence="1">
    <location>
        <position position="232"/>
    </location>
    <ligand>
        <name>NAD(+)</name>
        <dbReference type="ChEBI" id="CHEBI:57540"/>
    </ligand>
</feature>
<feature type="binding site" evidence="1">
    <location>
        <position position="257"/>
    </location>
    <ligand>
        <name>NAD(+)</name>
        <dbReference type="ChEBI" id="CHEBI:57540"/>
    </ligand>
</feature>
<feature type="binding site" evidence="1">
    <location>
        <position position="258"/>
    </location>
    <ligand>
        <name>substrate</name>
    </ligand>
</feature>
<comment type="function">
    <text evidence="1">Catalyzes the oxidation of erythronate-4-phosphate to 3-hydroxy-2-oxo-4-phosphonooxybutanoate.</text>
</comment>
<comment type="catalytic activity">
    <reaction evidence="1">
        <text>4-phospho-D-erythronate + NAD(+) = (R)-3-hydroxy-2-oxo-4-phosphooxybutanoate + NADH + H(+)</text>
        <dbReference type="Rhea" id="RHEA:18829"/>
        <dbReference type="ChEBI" id="CHEBI:15378"/>
        <dbReference type="ChEBI" id="CHEBI:57540"/>
        <dbReference type="ChEBI" id="CHEBI:57945"/>
        <dbReference type="ChEBI" id="CHEBI:58538"/>
        <dbReference type="ChEBI" id="CHEBI:58766"/>
        <dbReference type="EC" id="1.1.1.290"/>
    </reaction>
</comment>
<comment type="pathway">
    <text evidence="1">Cofactor biosynthesis; pyridoxine 5'-phosphate biosynthesis; pyridoxine 5'-phosphate from D-erythrose 4-phosphate: step 2/5.</text>
</comment>
<comment type="subunit">
    <text evidence="1">Homodimer.</text>
</comment>
<comment type="subcellular location">
    <subcellularLocation>
        <location evidence="1">Cytoplasm</location>
    </subcellularLocation>
</comment>
<comment type="similarity">
    <text evidence="1">Belongs to the D-isomer specific 2-hydroxyacid dehydrogenase family. PdxB subfamily.</text>
</comment>
<evidence type="ECO:0000255" key="1">
    <source>
        <dbReference type="HAMAP-Rule" id="MF_01825"/>
    </source>
</evidence>
<sequence length="377" mass="40428">MKILVDENMPYAEALFGRLGDVQTVAGRAIPAPALALADALMVRSVTRVDGALLDGSRVKFVGTATAGTDHVDEDWLAQAGIGFSVAPGCNAIAVVEYVFSALLWLAQRDGFALRDKTVGIVGVGNVGGRLQRRLNAFGVRTLLCDPPLAEAGAPGDWQPLETLVAEADVLTFHTPLTLAGRHATWHQVDEALLAALPAGRIIINACRGAVVDNAALLQALEGGKPLSVVLDVWEPEPALSLPLLARVDIGTAHIAGYTLEGKARGTTQVFDAYSAYVGSDERASLAALLPPPAVERIRLRGAIDEEALRLLSHLVYDVRRDDMQLRRVAGLPGEFDRLRKNYYQRREWSSLCVETDNSIGADALRQLGFQARPFAG</sequence>
<accession>Q2NSH9</accession>
<proteinExistence type="inferred from homology"/>
<organism>
    <name type="scientific">Sodalis glossinidius (strain morsitans)</name>
    <dbReference type="NCBI Taxonomy" id="343509"/>
    <lineage>
        <taxon>Bacteria</taxon>
        <taxon>Pseudomonadati</taxon>
        <taxon>Pseudomonadota</taxon>
        <taxon>Gammaproteobacteria</taxon>
        <taxon>Enterobacterales</taxon>
        <taxon>Bruguierivoracaceae</taxon>
        <taxon>Sodalis</taxon>
    </lineage>
</organism>
<reference key="1">
    <citation type="journal article" date="2006" name="Genome Res.">
        <title>Massive genome erosion and functional adaptations provide insights into the symbiotic lifestyle of Sodalis glossinidius in the tsetse host.</title>
        <authorList>
            <person name="Toh H."/>
            <person name="Weiss B.L."/>
            <person name="Perkin S.A.H."/>
            <person name="Yamashita A."/>
            <person name="Oshima K."/>
            <person name="Hattori M."/>
            <person name="Aksoy S."/>
        </authorList>
    </citation>
    <scope>NUCLEOTIDE SEQUENCE [LARGE SCALE GENOMIC DNA]</scope>
    <source>
        <strain>morsitans</strain>
    </source>
</reference>
<keyword id="KW-0963">Cytoplasm</keyword>
<keyword id="KW-0520">NAD</keyword>
<keyword id="KW-0560">Oxidoreductase</keyword>
<keyword id="KW-0664">Pyridoxine biosynthesis</keyword>
<dbReference type="EC" id="1.1.1.290" evidence="1"/>
<dbReference type="EMBL" id="AP008232">
    <property type="protein sequence ID" value="BAE74896.1"/>
    <property type="molecule type" value="Genomic_DNA"/>
</dbReference>
<dbReference type="RefSeq" id="WP_011411449.1">
    <property type="nucleotide sequence ID" value="NC_007712.1"/>
</dbReference>
<dbReference type="SMR" id="Q2NSH9"/>
<dbReference type="STRING" id="343509.SG1621"/>
<dbReference type="KEGG" id="sgl:SG1621"/>
<dbReference type="eggNOG" id="COG0111">
    <property type="taxonomic scope" value="Bacteria"/>
</dbReference>
<dbReference type="HOGENOM" id="CLU_019796_4_0_6"/>
<dbReference type="OrthoDB" id="9770208at2"/>
<dbReference type="BioCyc" id="SGLO343509:SGP1_RS14695-MONOMER"/>
<dbReference type="UniPathway" id="UPA00244">
    <property type="reaction ID" value="UER00310"/>
</dbReference>
<dbReference type="Proteomes" id="UP000001932">
    <property type="component" value="Chromosome"/>
</dbReference>
<dbReference type="GO" id="GO:0005829">
    <property type="term" value="C:cytosol"/>
    <property type="evidence" value="ECO:0007669"/>
    <property type="project" value="TreeGrafter"/>
</dbReference>
<dbReference type="GO" id="GO:0033711">
    <property type="term" value="F:4-phosphoerythronate dehydrogenase activity"/>
    <property type="evidence" value="ECO:0007669"/>
    <property type="project" value="UniProtKB-EC"/>
</dbReference>
<dbReference type="GO" id="GO:0051287">
    <property type="term" value="F:NAD binding"/>
    <property type="evidence" value="ECO:0007669"/>
    <property type="project" value="InterPro"/>
</dbReference>
<dbReference type="GO" id="GO:0046983">
    <property type="term" value="F:protein dimerization activity"/>
    <property type="evidence" value="ECO:0007669"/>
    <property type="project" value="InterPro"/>
</dbReference>
<dbReference type="GO" id="GO:0036001">
    <property type="term" value="P:'de novo' pyridoxal 5'-phosphate biosynthetic process"/>
    <property type="evidence" value="ECO:0007669"/>
    <property type="project" value="TreeGrafter"/>
</dbReference>
<dbReference type="GO" id="GO:0008615">
    <property type="term" value="P:pyridoxine biosynthetic process"/>
    <property type="evidence" value="ECO:0007669"/>
    <property type="project" value="UniProtKB-UniRule"/>
</dbReference>
<dbReference type="CDD" id="cd12158">
    <property type="entry name" value="ErythrP_dh"/>
    <property type="match status" value="1"/>
</dbReference>
<dbReference type="FunFam" id="3.40.50.720:FF:000093">
    <property type="entry name" value="Erythronate-4-phosphate dehydrogenase"/>
    <property type="match status" value="1"/>
</dbReference>
<dbReference type="Gene3D" id="3.30.1370.170">
    <property type="match status" value="1"/>
</dbReference>
<dbReference type="Gene3D" id="3.40.50.720">
    <property type="entry name" value="NAD(P)-binding Rossmann-like Domain"/>
    <property type="match status" value="2"/>
</dbReference>
<dbReference type="HAMAP" id="MF_01825">
    <property type="entry name" value="PdxB"/>
    <property type="match status" value="1"/>
</dbReference>
<dbReference type="InterPro" id="IPR006139">
    <property type="entry name" value="D-isomer_2_OHA_DH_cat_dom"/>
</dbReference>
<dbReference type="InterPro" id="IPR029753">
    <property type="entry name" value="D-isomer_DH_CS"/>
</dbReference>
<dbReference type="InterPro" id="IPR029752">
    <property type="entry name" value="D-isomer_DH_CS1"/>
</dbReference>
<dbReference type="InterPro" id="IPR006140">
    <property type="entry name" value="D-isomer_DH_NAD-bd"/>
</dbReference>
<dbReference type="InterPro" id="IPR020921">
    <property type="entry name" value="Erythronate-4-P_DHase"/>
</dbReference>
<dbReference type="InterPro" id="IPR024531">
    <property type="entry name" value="Erythronate-4-P_DHase_dimer"/>
</dbReference>
<dbReference type="InterPro" id="IPR036291">
    <property type="entry name" value="NAD(P)-bd_dom_sf"/>
</dbReference>
<dbReference type="InterPro" id="IPR038251">
    <property type="entry name" value="PdxB_dimer_sf"/>
</dbReference>
<dbReference type="NCBIfam" id="NF001309">
    <property type="entry name" value="PRK00257.1"/>
    <property type="match status" value="1"/>
</dbReference>
<dbReference type="PANTHER" id="PTHR42938">
    <property type="entry name" value="FORMATE DEHYDROGENASE 1"/>
    <property type="match status" value="1"/>
</dbReference>
<dbReference type="PANTHER" id="PTHR42938:SF9">
    <property type="entry name" value="FORMATE DEHYDROGENASE 1"/>
    <property type="match status" value="1"/>
</dbReference>
<dbReference type="Pfam" id="PF00389">
    <property type="entry name" value="2-Hacid_dh"/>
    <property type="match status" value="1"/>
</dbReference>
<dbReference type="Pfam" id="PF02826">
    <property type="entry name" value="2-Hacid_dh_C"/>
    <property type="match status" value="1"/>
</dbReference>
<dbReference type="Pfam" id="PF11890">
    <property type="entry name" value="DUF3410"/>
    <property type="match status" value="1"/>
</dbReference>
<dbReference type="SUPFAM" id="SSF52283">
    <property type="entry name" value="Formate/glycerate dehydrogenase catalytic domain-like"/>
    <property type="match status" value="1"/>
</dbReference>
<dbReference type="SUPFAM" id="SSF51735">
    <property type="entry name" value="NAD(P)-binding Rossmann-fold domains"/>
    <property type="match status" value="1"/>
</dbReference>
<dbReference type="PROSITE" id="PS00065">
    <property type="entry name" value="D_2_HYDROXYACID_DH_1"/>
    <property type="match status" value="1"/>
</dbReference>
<dbReference type="PROSITE" id="PS00671">
    <property type="entry name" value="D_2_HYDROXYACID_DH_3"/>
    <property type="match status" value="1"/>
</dbReference>
<name>PDXB_SODGM</name>